<dbReference type="EMBL" id="BX294020">
    <property type="protein sequence ID" value="CAD70926.1"/>
    <property type="molecule type" value="Genomic_DNA"/>
</dbReference>
<dbReference type="EMBL" id="CM002240">
    <property type="protein sequence ID" value="EAA31781.1"/>
    <property type="molecule type" value="Genomic_DNA"/>
</dbReference>
<dbReference type="RefSeq" id="XP_961017.1">
    <property type="nucleotide sequence ID" value="XM_955924.3"/>
</dbReference>
<dbReference type="FunCoup" id="Q871R7">
    <property type="interactions" value="314"/>
</dbReference>
<dbReference type="STRING" id="367110.Q871R7"/>
<dbReference type="PaxDb" id="5141-EFNCRP00000006618"/>
<dbReference type="EnsemblFungi" id="EAA31781">
    <property type="protein sequence ID" value="EAA31781"/>
    <property type="gene ID" value="NCU06702"/>
</dbReference>
<dbReference type="GeneID" id="3877164"/>
<dbReference type="KEGG" id="ncr:NCU06702"/>
<dbReference type="VEuPathDB" id="FungiDB:NCU06702"/>
<dbReference type="HOGENOM" id="CLU_028431_2_1_1"/>
<dbReference type="InParanoid" id="Q871R7"/>
<dbReference type="OMA" id="DTQYWVV"/>
<dbReference type="OrthoDB" id="10009287at2759"/>
<dbReference type="Proteomes" id="UP000001805">
    <property type="component" value="Chromosome 2, Linkage Group V"/>
</dbReference>
<dbReference type="GO" id="GO:0032153">
    <property type="term" value="C:cell division site"/>
    <property type="evidence" value="ECO:0007669"/>
    <property type="project" value="EnsemblFungi"/>
</dbReference>
<dbReference type="GO" id="GO:0032541">
    <property type="term" value="C:cortical endoplasmic reticulum"/>
    <property type="evidence" value="ECO:0007669"/>
    <property type="project" value="EnsemblFungi"/>
</dbReference>
<dbReference type="GO" id="GO:0005789">
    <property type="term" value="C:endoplasmic reticulum membrane"/>
    <property type="evidence" value="ECO:0007669"/>
    <property type="project" value="UniProtKB-SubCell"/>
</dbReference>
<dbReference type="GO" id="GO:0000139">
    <property type="term" value="C:Golgi membrane"/>
    <property type="evidence" value="ECO:0007669"/>
    <property type="project" value="UniProtKB-SubCell"/>
</dbReference>
<dbReference type="GO" id="GO:0005635">
    <property type="term" value="C:nuclear envelope"/>
    <property type="evidence" value="ECO:0007669"/>
    <property type="project" value="EnsemblFungi"/>
</dbReference>
<dbReference type="GO" id="GO:0180020">
    <property type="term" value="F:membrane bending activity"/>
    <property type="evidence" value="ECO:0007669"/>
    <property type="project" value="EnsemblFungi"/>
</dbReference>
<dbReference type="GO" id="GO:0048309">
    <property type="term" value="P:endoplasmic reticulum inheritance"/>
    <property type="evidence" value="ECO:0007669"/>
    <property type="project" value="EnsemblFungi"/>
</dbReference>
<dbReference type="GO" id="GO:1990809">
    <property type="term" value="P:endoplasmic reticulum tubular network membrane organization"/>
    <property type="evidence" value="ECO:0007669"/>
    <property type="project" value="EnsemblFungi"/>
</dbReference>
<dbReference type="GO" id="GO:0032581">
    <property type="term" value="P:ER-dependent peroxisome organization"/>
    <property type="evidence" value="ECO:0007669"/>
    <property type="project" value="EnsemblFungi"/>
</dbReference>
<dbReference type="GO" id="GO:0051292">
    <property type="term" value="P:nuclear pore complex assembly"/>
    <property type="evidence" value="ECO:0007669"/>
    <property type="project" value="EnsemblFungi"/>
</dbReference>
<dbReference type="GO" id="GO:0034976">
    <property type="term" value="P:response to endoplasmic reticulum stress"/>
    <property type="evidence" value="ECO:0007669"/>
    <property type="project" value="EnsemblFungi"/>
</dbReference>
<dbReference type="GO" id="GO:0007033">
    <property type="term" value="P:vacuole organization"/>
    <property type="evidence" value="ECO:0007669"/>
    <property type="project" value="EnsemblFungi"/>
</dbReference>
<dbReference type="GO" id="GO:0016192">
    <property type="term" value="P:vesicle-mediated transport"/>
    <property type="evidence" value="ECO:0007669"/>
    <property type="project" value="EnsemblFungi"/>
</dbReference>
<dbReference type="InterPro" id="IPR004345">
    <property type="entry name" value="TB2_DP1_HVA22"/>
</dbReference>
<dbReference type="PANTHER" id="PTHR12300">
    <property type="entry name" value="HVA22-LIKE PROTEINS"/>
    <property type="match status" value="1"/>
</dbReference>
<dbReference type="PANTHER" id="PTHR12300:SF161">
    <property type="entry name" value="RECEPTOR EXPRESSION-ENHANCING PROTEIN"/>
    <property type="match status" value="1"/>
</dbReference>
<dbReference type="Pfam" id="PF03134">
    <property type="entry name" value="TB2_DP1_HVA22"/>
    <property type="match status" value="1"/>
</dbReference>
<protein>
    <recommendedName>
        <fullName>Protein yop-1</fullName>
    </recommendedName>
</protein>
<feature type="chain" id="PRO_0000101855" description="Protein yop-1">
    <location>
        <begin position="1"/>
        <end position="168"/>
    </location>
</feature>
<feature type="topological domain" description="Cytoplasmic" evidence="1">
    <location>
        <begin position="1"/>
        <end position="35"/>
    </location>
</feature>
<feature type="transmembrane region" description="Helical" evidence="1">
    <location>
        <begin position="36"/>
        <end position="55"/>
    </location>
</feature>
<feature type="topological domain" description="Lumenal" evidence="1">
    <location>
        <position position="56"/>
    </location>
</feature>
<feature type="transmembrane region" description="Helical" evidence="1">
    <location>
        <begin position="57"/>
        <end position="76"/>
    </location>
</feature>
<feature type="topological domain" description="Cytoplasmic" evidence="1">
    <location>
        <begin position="77"/>
        <end position="86"/>
    </location>
</feature>
<feature type="transmembrane region" description="Helical" evidence="1">
    <location>
        <begin position="87"/>
        <end position="103"/>
    </location>
</feature>
<feature type="topological domain" description="Lumenal" evidence="1">
    <location>
        <begin position="104"/>
        <end position="105"/>
    </location>
</feature>
<feature type="transmembrane region" description="Helical" evidence="1">
    <location>
        <begin position="106"/>
        <end position="124"/>
    </location>
</feature>
<feature type="topological domain" description="Cytoplasmic" evidence="1">
    <location>
        <begin position="125"/>
        <end position="168"/>
    </location>
</feature>
<keyword id="KW-0256">Endoplasmic reticulum</keyword>
<keyword id="KW-0333">Golgi apparatus</keyword>
<keyword id="KW-0472">Membrane</keyword>
<keyword id="KW-1185">Reference proteome</keyword>
<keyword id="KW-0812">Transmembrane</keyword>
<keyword id="KW-1133">Transmembrane helix</keyword>
<proteinExistence type="inferred from homology"/>
<comment type="function">
    <text evidence="1">Required to generate and maintain the structure of the tubular endoplasmic reticulum network and the vacuole. Induces high curvature in membranes and causes membrane tubule formation. Involved in membrane/vesicle trafficking.</text>
</comment>
<comment type="subunit">
    <text evidence="1">Oligomer.</text>
</comment>
<comment type="subcellular location">
    <subcellularLocation>
        <location evidence="1">Endoplasmic reticulum membrane</location>
        <topology evidence="1">Multi-pass membrane protein</topology>
    </subcellularLocation>
    <subcellularLocation>
        <location evidence="1">Golgi apparatus membrane</location>
        <topology evidence="2">Multi-pass membrane protein</topology>
    </subcellularLocation>
</comment>
<comment type="domain">
    <text evidence="1">The short lumenal loops between transmembrane domains 1 and 2 and between transmembrane domains 3 and 4 may impart a wedge-like configuration, thus deforming membranes.</text>
</comment>
<comment type="similarity">
    <text evidence="3">Belongs to the DP1 family.</text>
</comment>
<gene>
    <name type="primary">yop-1</name>
    <name type="ORF">7F4.240</name>
    <name type="ORF">NCU06702</name>
</gene>
<sequence>MSSPQDRAQQYIGQLDKELSKYPTLNNLEKTTGVPKAYAVIGLVALYFFLIIFNLGGQLLTNLAGFVLPGYYSLNALFTASKQDDTQWLTYWVVFSLFTVIESLISVVYWFPFYFTFKFVFLLWLSLPTFKGAETIFRSFLAPTLGRYFQNGSTASGLRAKADAVHTD</sequence>
<organism>
    <name type="scientific">Neurospora crassa (strain ATCC 24698 / 74-OR23-1A / CBS 708.71 / DSM 1257 / FGSC 987)</name>
    <dbReference type="NCBI Taxonomy" id="367110"/>
    <lineage>
        <taxon>Eukaryota</taxon>
        <taxon>Fungi</taxon>
        <taxon>Dikarya</taxon>
        <taxon>Ascomycota</taxon>
        <taxon>Pezizomycotina</taxon>
        <taxon>Sordariomycetes</taxon>
        <taxon>Sordariomycetidae</taxon>
        <taxon>Sordariales</taxon>
        <taxon>Sordariaceae</taxon>
        <taxon>Neurospora</taxon>
    </lineage>
</organism>
<name>YOP1_NEUCR</name>
<reference key="1">
    <citation type="journal article" date="2003" name="Nucleic Acids Res.">
        <title>What's in the genome of a filamentous fungus? Analysis of the Neurospora genome sequence.</title>
        <authorList>
            <person name="Mannhaupt G."/>
            <person name="Montrone C."/>
            <person name="Haase D."/>
            <person name="Mewes H.-W."/>
            <person name="Aign V."/>
            <person name="Hoheisel J.D."/>
            <person name="Fartmann B."/>
            <person name="Nyakatura G."/>
            <person name="Kempken F."/>
            <person name="Maier J."/>
            <person name="Schulte U."/>
        </authorList>
    </citation>
    <scope>NUCLEOTIDE SEQUENCE [LARGE SCALE GENOMIC DNA]</scope>
    <source>
        <strain>ATCC 24698 / 74-OR23-1A / CBS 708.71 / DSM 1257 / FGSC 987</strain>
    </source>
</reference>
<reference key="2">
    <citation type="journal article" date="2003" name="Nature">
        <title>The genome sequence of the filamentous fungus Neurospora crassa.</title>
        <authorList>
            <person name="Galagan J.E."/>
            <person name="Calvo S.E."/>
            <person name="Borkovich K.A."/>
            <person name="Selker E.U."/>
            <person name="Read N.D."/>
            <person name="Jaffe D.B."/>
            <person name="FitzHugh W."/>
            <person name="Ma L.-J."/>
            <person name="Smirnov S."/>
            <person name="Purcell S."/>
            <person name="Rehman B."/>
            <person name="Elkins T."/>
            <person name="Engels R."/>
            <person name="Wang S."/>
            <person name="Nielsen C.B."/>
            <person name="Butler J."/>
            <person name="Endrizzi M."/>
            <person name="Qui D."/>
            <person name="Ianakiev P."/>
            <person name="Bell-Pedersen D."/>
            <person name="Nelson M.A."/>
            <person name="Werner-Washburne M."/>
            <person name="Selitrennikoff C.P."/>
            <person name="Kinsey J.A."/>
            <person name="Braun E.L."/>
            <person name="Zelter A."/>
            <person name="Schulte U."/>
            <person name="Kothe G.O."/>
            <person name="Jedd G."/>
            <person name="Mewes H.-W."/>
            <person name="Staben C."/>
            <person name="Marcotte E."/>
            <person name="Greenberg D."/>
            <person name="Roy A."/>
            <person name="Foley K."/>
            <person name="Naylor J."/>
            <person name="Stange-Thomann N."/>
            <person name="Barrett R."/>
            <person name="Gnerre S."/>
            <person name="Kamal M."/>
            <person name="Kamvysselis M."/>
            <person name="Mauceli E.W."/>
            <person name="Bielke C."/>
            <person name="Rudd S."/>
            <person name="Frishman D."/>
            <person name="Krystofova S."/>
            <person name="Rasmussen C."/>
            <person name="Metzenberg R.L."/>
            <person name="Perkins D.D."/>
            <person name="Kroken S."/>
            <person name="Cogoni C."/>
            <person name="Macino G."/>
            <person name="Catcheside D.E.A."/>
            <person name="Li W."/>
            <person name="Pratt R.J."/>
            <person name="Osmani S.A."/>
            <person name="DeSouza C.P.C."/>
            <person name="Glass N.L."/>
            <person name="Orbach M.J."/>
            <person name="Berglund J.A."/>
            <person name="Voelker R."/>
            <person name="Yarden O."/>
            <person name="Plamann M."/>
            <person name="Seiler S."/>
            <person name="Dunlap J.C."/>
            <person name="Radford A."/>
            <person name="Aramayo R."/>
            <person name="Natvig D.O."/>
            <person name="Alex L.A."/>
            <person name="Mannhaupt G."/>
            <person name="Ebbole D.J."/>
            <person name="Freitag M."/>
            <person name="Paulsen I."/>
            <person name="Sachs M.S."/>
            <person name="Lander E.S."/>
            <person name="Nusbaum C."/>
            <person name="Birren B.W."/>
        </authorList>
    </citation>
    <scope>NUCLEOTIDE SEQUENCE [LARGE SCALE GENOMIC DNA]</scope>
    <source>
        <strain>ATCC 24698 / 74-OR23-1A / CBS 708.71 / DSM 1257 / FGSC 987</strain>
    </source>
</reference>
<evidence type="ECO:0000250" key="1">
    <source>
        <dbReference type="UniProtKB" id="Q12402"/>
    </source>
</evidence>
<evidence type="ECO:0000255" key="2"/>
<evidence type="ECO:0000305" key="3"/>
<accession>Q871R7</accession>
<accession>Q1K737</accession>